<accession>Q5FWH2</accession>
<accession>Q6RUT6</accession>
<accession>Q9DBK4</accession>
<dbReference type="EC" id="2.3.2.-"/>
<dbReference type="EMBL" id="AK004898">
    <property type="protein sequence ID" value="BAB23653.1"/>
    <property type="molecule type" value="mRNA"/>
</dbReference>
<dbReference type="EMBL" id="AY491413">
    <property type="protein sequence ID" value="AAS21649.1"/>
    <property type="molecule type" value="Genomic_DNA"/>
</dbReference>
<dbReference type="EMBL" id="BC089378">
    <property type="protein sequence ID" value="AAH89378.1"/>
    <property type="molecule type" value="mRNA"/>
</dbReference>
<dbReference type="EMBL" id="BC059910">
    <property type="status" value="NOT_ANNOTATED_CDS"/>
    <property type="molecule type" value="mRNA"/>
</dbReference>
<dbReference type="CCDS" id="CCDS28510.1">
    <molecule id="Q5FWH2-2"/>
</dbReference>
<dbReference type="CCDS" id="CCDS57058.1">
    <molecule id="Q5FWH2-3"/>
</dbReference>
<dbReference type="RefSeq" id="NP_001183953.1">
    <molecule id="Q5FWH2-3"/>
    <property type="nucleotide sequence ID" value="NM_001197024.1"/>
</dbReference>
<dbReference type="RefSeq" id="NP_083065.1">
    <molecule id="Q5FWH2-2"/>
    <property type="nucleotide sequence ID" value="NM_028789.3"/>
</dbReference>
<dbReference type="RefSeq" id="XP_017173186.1">
    <molecule id="Q5FWH2-1"/>
    <property type="nucleotide sequence ID" value="XM_017317697.1"/>
</dbReference>
<dbReference type="RefSeq" id="XP_017173187.1">
    <molecule id="Q5FWH2-1"/>
    <property type="nucleotide sequence ID" value="XM_017317698.2"/>
</dbReference>
<dbReference type="RefSeq" id="XP_030105975.1">
    <molecule id="Q5FWH2-2"/>
    <property type="nucleotide sequence ID" value="XM_030250115.2"/>
</dbReference>
<dbReference type="RefSeq" id="XP_030105976.1">
    <molecule id="Q5FWH2-1"/>
    <property type="nucleotide sequence ID" value="XM_030250116.1"/>
</dbReference>
<dbReference type="RefSeq" id="XP_030105977.1">
    <molecule id="Q5FWH2-1"/>
    <property type="nucleotide sequence ID" value="XM_030250117.1"/>
</dbReference>
<dbReference type="SMR" id="Q5FWH2"/>
<dbReference type="BioGRID" id="216531">
    <property type="interactions" value="1"/>
</dbReference>
<dbReference type="FunCoup" id="Q5FWH2">
    <property type="interactions" value="1727"/>
</dbReference>
<dbReference type="IntAct" id="Q5FWH2">
    <property type="interactions" value="1"/>
</dbReference>
<dbReference type="MINT" id="Q5FWH2"/>
<dbReference type="STRING" id="10090.ENSMUSP00000039670"/>
<dbReference type="GlyGen" id="Q5FWH2">
    <property type="glycosylation" value="2 sites, 1 O-linked glycan (2 sites)"/>
</dbReference>
<dbReference type="iPTMnet" id="Q5FWH2"/>
<dbReference type="PhosphoSitePlus" id="Q5FWH2"/>
<dbReference type="ProteomicsDB" id="275385">
    <molecule id="Q5FWH2-3"/>
</dbReference>
<dbReference type="ProteomicsDB" id="275386">
    <molecule id="Q5FWH2-1"/>
</dbReference>
<dbReference type="ProteomicsDB" id="275387">
    <molecule id="Q5FWH2-2"/>
</dbReference>
<dbReference type="Antibodypedia" id="34818">
    <property type="antibodies" value="116 antibodies from 19 providers"/>
</dbReference>
<dbReference type="DNASU" id="74154"/>
<dbReference type="Ensembl" id="ENSMUST00000015271.12">
    <molecule id="Q5FWH2-2"/>
    <property type="protein sequence ID" value="ENSMUSP00000015271.6"/>
    <property type="gene ID" value="ENSMUSG00000015127.15"/>
</dbReference>
<dbReference type="Ensembl" id="ENSMUST00000039734.12">
    <molecule id="Q5FWH2-3"/>
    <property type="protein sequence ID" value="ENSMUSP00000039670.6"/>
    <property type="gene ID" value="ENSMUSG00000015127.15"/>
</dbReference>
<dbReference type="GeneID" id="74154"/>
<dbReference type="KEGG" id="mmu:74154"/>
<dbReference type="UCSC" id="uc008baa.2">
    <molecule id="Q5FWH2-2"/>
    <property type="organism name" value="mouse"/>
</dbReference>
<dbReference type="UCSC" id="uc012ana.2">
    <molecule id="Q5FWH2-3"/>
    <property type="organism name" value="mouse"/>
</dbReference>
<dbReference type="AGR" id="MGI:1921404"/>
<dbReference type="CTD" id="64718"/>
<dbReference type="MGI" id="MGI:1921404">
    <property type="gene designation" value="Unkl"/>
</dbReference>
<dbReference type="VEuPathDB" id="HostDB:ENSMUSG00000015127"/>
<dbReference type="eggNOG" id="KOG1100">
    <property type="taxonomic scope" value="Eukaryota"/>
</dbReference>
<dbReference type="GeneTree" id="ENSGT00940000158822"/>
<dbReference type="HOGENOM" id="CLU_014526_1_0_1"/>
<dbReference type="InParanoid" id="Q5FWH2"/>
<dbReference type="OMA" id="EWGCRDL"/>
<dbReference type="OrthoDB" id="20534at2759"/>
<dbReference type="PhylomeDB" id="Q5FWH2"/>
<dbReference type="Reactome" id="R-MMU-983168">
    <property type="pathway name" value="Antigen processing: Ubiquitination &amp; Proteasome degradation"/>
</dbReference>
<dbReference type="UniPathway" id="UPA00143"/>
<dbReference type="BioGRID-ORCS" id="74154">
    <property type="hits" value="4 hits in 77 CRISPR screens"/>
</dbReference>
<dbReference type="ChiTaRS" id="Unkl">
    <property type="organism name" value="mouse"/>
</dbReference>
<dbReference type="PRO" id="PR:Q5FWH2"/>
<dbReference type="Proteomes" id="UP000000589">
    <property type="component" value="Chromosome 17"/>
</dbReference>
<dbReference type="RNAct" id="Q5FWH2">
    <property type="molecule type" value="protein"/>
</dbReference>
<dbReference type="Bgee" id="ENSMUSG00000015127">
    <property type="expression patterns" value="Expressed in otolith organ and 211 other cell types or tissues"/>
</dbReference>
<dbReference type="ExpressionAtlas" id="Q5FWH2">
    <property type="expression patterns" value="baseline and differential"/>
</dbReference>
<dbReference type="GO" id="GO:0005829">
    <property type="term" value="C:cytosol"/>
    <property type="evidence" value="ECO:0007669"/>
    <property type="project" value="Ensembl"/>
</dbReference>
<dbReference type="GO" id="GO:0005634">
    <property type="term" value="C:nucleus"/>
    <property type="evidence" value="ECO:0007669"/>
    <property type="project" value="UniProtKB-SubCell"/>
</dbReference>
<dbReference type="GO" id="GO:0016740">
    <property type="term" value="F:transferase activity"/>
    <property type="evidence" value="ECO:0007669"/>
    <property type="project" value="UniProtKB-KW"/>
</dbReference>
<dbReference type="GO" id="GO:0008270">
    <property type="term" value="F:zinc ion binding"/>
    <property type="evidence" value="ECO:0007669"/>
    <property type="project" value="UniProtKB-KW"/>
</dbReference>
<dbReference type="GO" id="GO:0016567">
    <property type="term" value="P:protein ubiquitination"/>
    <property type="evidence" value="ECO:0007669"/>
    <property type="project" value="UniProtKB-UniPathway"/>
</dbReference>
<dbReference type="Gene3D" id="4.10.1000.10">
    <property type="entry name" value="Zinc finger, CCCH-type"/>
    <property type="match status" value="1"/>
</dbReference>
<dbReference type="Gene3D" id="3.30.40.10">
    <property type="entry name" value="Zinc/RING finger domain, C3HC4 (zinc finger)"/>
    <property type="match status" value="1"/>
</dbReference>
<dbReference type="InterPro" id="IPR045234">
    <property type="entry name" value="Unkempt-like"/>
</dbReference>
<dbReference type="InterPro" id="IPR040594">
    <property type="entry name" value="Unkempt_Znf"/>
</dbReference>
<dbReference type="InterPro" id="IPR000571">
    <property type="entry name" value="Znf_CCCH"/>
</dbReference>
<dbReference type="InterPro" id="IPR036855">
    <property type="entry name" value="Znf_CCCH_sf"/>
</dbReference>
<dbReference type="InterPro" id="IPR001841">
    <property type="entry name" value="Znf_RING"/>
</dbReference>
<dbReference type="InterPro" id="IPR013083">
    <property type="entry name" value="Znf_RING/FYVE/PHD"/>
</dbReference>
<dbReference type="PANTHER" id="PTHR14493:SF37">
    <property type="entry name" value="E3 UBIQUITIN-PROTEIN LIGASE UNKL-RELATED"/>
    <property type="match status" value="1"/>
</dbReference>
<dbReference type="PANTHER" id="PTHR14493">
    <property type="entry name" value="UNKEMPT FAMILY MEMBER"/>
    <property type="match status" value="1"/>
</dbReference>
<dbReference type="Pfam" id="PF13920">
    <property type="entry name" value="zf-C3HC4_3"/>
    <property type="match status" value="1"/>
</dbReference>
<dbReference type="Pfam" id="PF00642">
    <property type="entry name" value="zf-CCCH"/>
    <property type="match status" value="1"/>
</dbReference>
<dbReference type="Pfam" id="PF23261">
    <property type="entry name" value="zf-CCCH_11"/>
    <property type="match status" value="1"/>
</dbReference>
<dbReference type="Pfam" id="PF25427">
    <property type="entry name" value="zf-CCCH_UNK"/>
    <property type="match status" value="1"/>
</dbReference>
<dbReference type="Pfam" id="PF23035">
    <property type="entry name" value="zf-CCCH_UNK-like_4th"/>
    <property type="match status" value="1"/>
</dbReference>
<dbReference type="Pfam" id="PF18384">
    <property type="entry name" value="zf_CCCH_5"/>
    <property type="match status" value="1"/>
</dbReference>
<dbReference type="SMART" id="SM00356">
    <property type="entry name" value="ZnF_C3H1"/>
    <property type="match status" value="4"/>
</dbReference>
<dbReference type="SUPFAM" id="SSF90229">
    <property type="entry name" value="CCCH zinc finger"/>
    <property type="match status" value="1"/>
</dbReference>
<dbReference type="PROSITE" id="PS50103">
    <property type="entry name" value="ZF_C3H1"/>
    <property type="match status" value="4"/>
</dbReference>
<dbReference type="PROSITE" id="PS50089">
    <property type="entry name" value="ZF_RING_2"/>
    <property type="match status" value="1"/>
</dbReference>
<keyword id="KW-0025">Alternative splicing</keyword>
<keyword id="KW-0963">Cytoplasm</keyword>
<keyword id="KW-0479">Metal-binding</keyword>
<keyword id="KW-0539">Nucleus</keyword>
<keyword id="KW-1185">Reference proteome</keyword>
<keyword id="KW-0677">Repeat</keyword>
<keyword id="KW-0808">Transferase</keyword>
<keyword id="KW-0832">Ubl conjugation</keyword>
<keyword id="KW-0833">Ubl conjugation pathway</keyword>
<keyword id="KW-0862">Zinc</keyword>
<keyword id="KW-0863">Zinc-finger</keyword>
<evidence type="ECO:0000250" key="1"/>
<evidence type="ECO:0000255" key="2">
    <source>
        <dbReference type="PROSITE-ProRule" id="PRU00175"/>
    </source>
</evidence>
<evidence type="ECO:0000255" key="3">
    <source>
        <dbReference type="PROSITE-ProRule" id="PRU00723"/>
    </source>
</evidence>
<evidence type="ECO:0000256" key="4">
    <source>
        <dbReference type="SAM" id="MobiDB-lite"/>
    </source>
</evidence>
<evidence type="ECO:0000303" key="5">
    <source>
    </source>
</evidence>
<evidence type="ECO:0000303" key="6">
    <source>
    </source>
</evidence>
<evidence type="ECO:0000305" key="7"/>
<proteinExistence type="evidence at transcript level"/>
<name>UNKL_MOUSE</name>
<feature type="chain" id="PRO_0000278668" description="Putative E3 ubiquitin-protein ligase UNKL">
    <location>
        <begin position="1"/>
        <end position="727"/>
    </location>
</feature>
<feature type="zinc finger region" description="C3H1-type 1" evidence="3">
    <location>
        <begin position="75"/>
        <end position="104"/>
    </location>
</feature>
<feature type="zinc finger region" description="C3H1-type 2" evidence="3">
    <location>
        <begin position="115"/>
        <end position="145"/>
    </location>
</feature>
<feature type="zinc finger region" description="C3H1-type 3" evidence="3">
    <location>
        <begin position="243"/>
        <end position="277"/>
    </location>
</feature>
<feature type="zinc finger region" description="C3H1-type 4" evidence="3">
    <location>
        <begin position="285"/>
        <end position="313"/>
    </location>
</feature>
<feature type="zinc finger region" description="RING-type" evidence="2">
    <location>
        <begin position="686"/>
        <end position="721"/>
    </location>
</feature>
<feature type="region of interest" description="Disordered" evidence="4">
    <location>
        <begin position="1"/>
        <end position="21"/>
    </location>
</feature>
<feature type="region of interest" description="Disordered" evidence="4">
    <location>
        <begin position="330"/>
        <end position="360"/>
    </location>
</feature>
<feature type="region of interest" description="Disordered" evidence="4">
    <location>
        <begin position="446"/>
        <end position="514"/>
    </location>
</feature>
<feature type="region of interest" description="Disordered" evidence="4">
    <location>
        <begin position="543"/>
        <end position="562"/>
    </location>
</feature>
<feature type="compositionally biased region" description="Polar residues" evidence="4">
    <location>
        <begin position="330"/>
        <end position="339"/>
    </location>
</feature>
<feature type="compositionally biased region" description="Low complexity" evidence="4">
    <location>
        <begin position="463"/>
        <end position="495"/>
    </location>
</feature>
<feature type="splice variant" id="VSP_039444" description="In isoform 1." evidence="5">
    <location>
        <begin position="1"/>
        <end position="496"/>
    </location>
</feature>
<feature type="splice variant" id="VSP_039445" description="In isoform 2." evidence="6">
    <location>
        <begin position="1"/>
        <end position="412"/>
    </location>
</feature>
<feature type="splice variant" id="VSP_039446" description="In isoform 2." evidence="6">
    <original>NTVGAVI</original>
    <variation>MRPPTLP</variation>
    <location>
        <begin position="413"/>
        <end position="419"/>
    </location>
</feature>
<feature type="splice variant" id="VSP_039447" description="In isoform 2." evidence="6">
    <location>
        <begin position="449"/>
        <end position="524"/>
    </location>
</feature>
<feature type="sequence conflict" description="In Ref. 2; AAS21649." evidence="7" ref="2">
    <original>K</original>
    <variation>T</variation>
    <location>
        <position position="629"/>
    </location>
</feature>
<sequence length="727" mass="79636">MPSVSKAAAAALSGSPPQTEKPTHYRYLKEFRTEQCSLFLQHKCSQHRPFTCFHWHFLNQRRRRPLRRRDGTFNYSPDIYCSKYDEATGLCPDGDECPYLHRTTGDTERKYHLRYYKTGTCIHETDARGHCVKNGLHCAFAHGPLDLRPPVCDIRELQAQEALQNGQLSGGDGVPDLQPGVLASQAMIEKILGEDPRWQDSNFVLGSYKTEQCPKPPRLCRQGYACPHYHNSRDRRRNPRRFQYRSTPCPSVKHGDEWGEPSRCDGGDSCQYCHSRTEQQFHPEIYKSTKCNDMRQTGYCPRGPFCAFAHTEKSLAMVNEWSCRDLSSNSTSAYSSQPGSAKRKDSPSEGSQKATEDSKQNHLAVFSVAHPLAHSISSSVASSLASSTGSGSSSPTTLPTLPARALPLDPAGNTVGAVIGSALDLRLSDINIASLDKDLEEQDLGLTGPRSLAGSAPVTIPGSLPRSPSLHSSSSLSTSPLSSLSQSLSGPLVSSAMTPPQQPPPLRSEPATLGSAASSYSSLGLNGVPGSIWDFVSGSFSPSPSPILNSGPSASSSASPNSAELARVRRQLDEAKRKIRQWEESWQQVKQACDAWQREAQEAKERARVADSDRQLALQRKEEVEAKVKQLQEELEGLGLSSLPGLQSLGDISDIPLPKLHSLQSKLRLDLEAVDGVIFQLRAKQCVACQERAHGTVLRPCQHRVLCEPCAASTPECPYCKGQPLPW</sequence>
<protein>
    <recommendedName>
        <fullName>Putative E3 ubiquitin-protein ligase UNKL</fullName>
        <ecNumber>2.3.2.-</ecNumber>
    </recommendedName>
    <alternativeName>
        <fullName>RING finger protein unkempt-like</fullName>
    </alternativeName>
</protein>
<reference key="1">
    <citation type="journal article" date="2005" name="Science">
        <title>The transcriptional landscape of the mammalian genome.</title>
        <authorList>
            <person name="Carninci P."/>
            <person name="Kasukawa T."/>
            <person name="Katayama S."/>
            <person name="Gough J."/>
            <person name="Frith M.C."/>
            <person name="Maeda N."/>
            <person name="Oyama R."/>
            <person name="Ravasi T."/>
            <person name="Lenhard B."/>
            <person name="Wells C."/>
            <person name="Kodzius R."/>
            <person name="Shimokawa K."/>
            <person name="Bajic V.B."/>
            <person name="Brenner S.E."/>
            <person name="Batalov S."/>
            <person name="Forrest A.R."/>
            <person name="Zavolan M."/>
            <person name="Davis M.J."/>
            <person name="Wilming L.G."/>
            <person name="Aidinis V."/>
            <person name="Allen J.E."/>
            <person name="Ambesi-Impiombato A."/>
            <person name="Apweiler R."/>
            <person name="Aturaliya R.N."/>
            <person name="Bailey T.L."/>
            <person name="Bansal M."/>
            <person name="Baxter L."/>
            <person name="Beisel K.W."/>
            <person name="Bersano T."/>
            <person name="Bono H."/>
            <person name="Chalk A.M."/>
            <person name="Chiu K.P."/>
            <person name="Choudhary V."/>
            <person name="Christoffels A."/>
            <person name="Clutterbuck D.R."/>
            <person name="Crowe M.L."/>
            <person name="Dalla E."/>
            <person name="Dalrymple B.P."/>
            <person name="de Bono B."/>
            <person name="Della Gatta G."/>
            <person name="di Bernardo D."/>
            <person name="Down T."/>
            <person name="Engstrom P."/>
            <person name="Fagiolini M."/>
            <person name="Faulkner G."/>
            <person name="Fletcher C.F."/>
            <person name="Fukushima T."/>
            <person name="Furuno M."/>
            <person name="Futaki S."/>
            <person name="Gariboldi M."/>
            <person name="Georgii-Hemming P."/>
            <person name="Gingeras T.R."/>
            <person name="Gojobori T."/>
            <person name="Green R.E."/>
            <person name="Gustincich S."/>
            <person name="Harbers M."/>
            <person name="Hayashi Y."/>
            <person name="Hensch T.K."/>
            <person name="Hirokawa N."/>
            <person name="Hill D."/>
            <person name="Huminiecki L."/>
            <person name="Iacono M."/>
            <person name="Ikeo K."/>
            <person name="Iwama A."/>
            <person name="Ishikawa T."/>
            <person name="Jakt M."/>
            <person name="Kanapin A."/>
            <person name="Katoh M."/>
            <person name="Kawasawa Y."/>
            <person name="Kelso J."/>
            <person name="Kitamura H."/>
            <person name="Kitano H."/>
            <person name="Kollias G."/>
            <person name="Krishnan S.P."/>
            <person name="Kruger A."/>
            <person name="Kummerfeld S.K."/>
            <person name="Kurochkin I.V."/>
            <person name="Lareau L.F."/>
            <person name="Lazarevic D."/>
            <person name="Lipovich L."/>
            <person name="Liu J."/>
            <person name="Liuni S."/>
            <person name="McWilliam S."/>
            <person name="Madan Babu M."/>
            <person name="Madera M."/>
            <person name="Marchionni L."/>
            <person name="Matsuda H."/>
            <person name="Matsuzawa S."/>
            <person name="Miki H."/>
            <person name="Mignone F."/>
            <person name="Miyake S."/>
            <person name="Morris K."/>
            <person name="Mottagui-Tabar S."/>
            <person name="Mulder N."/>
            <person name="Nakano N."/>
            <person name="Nakauchi H."/>
            <person name="Ng P."/>
            <person name="Nilsson R."/>
            <person name="Nishiguchi S."/>
            <person name="Nishikawa S."/>
            <person name="Nori F."/>
            <person name="Ohara O."/>
            <person name="Okazaki Y."/>
            <person name="Orlando V."/>
            <person name="Pang K.C."/>
            <person name="Pavan W.J."/>
            <person name="Pavesi G."/>
            <person name="Pesole G."/>
            <person name="Petrovsky N."/>
            <person name="Piazza S."/>
            <person name="Reed J."/>
            <person name="Reid J.F."/>
            <person name="Ring B.Z."/>
            <person name="Ringwald M."/>
            <person name="Rost B."/>
            <person name="Ruan Y."/>
            <person name="Salzberg S.L."/>
            <person name="Sandelin A."/>
            <person name="Schneider C."/>
            <person name="Schoenbach C."/>
            <person name="Sekiguchi K."/>
            <person name="Semple C.A."/>
            <person name="Seno S."/>
            <person name="Sessa L."/>
            <person name="Sheng Y."/>
            <person name="Shibata Y."/>
            <person name="Shimada H."/>
            <person name="Shimada K."/>
            <person name="Silva D."/>
            <person name="Sinclair B."/>
            <person name="Sperling S."/>
            <person name="Stupka E."/>
            <person name="Sugiura K."/>
            <person name="Sultana R."/>
            <person name="Takenaka Y."/>
            <person name="Taki K."/>
            <person name="Tammoja K."/>
            <person name="Tan S.L."/>
            <person name="Tang S."/>
            <person name="Taylor M.S."/>
            <person name="Tegner J."/>
            <person name="Teichmann S.A."/>
            <person name="Ueda H.R."/>
            <person name="van Nimwegen E."/>
            <person name="Verardo R."/>
            <person name="Wei C.L."/>
            <person name="Yagi K."/>
            <person name="Yamanishi H."/>
            <person name="Zabarovsky E."/>
            <person name="Zhu S."/>
            <person name="Zimmer A."/>
            <person name="Hide W."/>
            <person name="Bult C."/>
            <person name="Grimmond S.M."/>
            <person name="Teasdale R.D."/>
            <person name="Liu E.T."/>
            <person name="Brusic V."/>
            <person name="Quackenbush J."/>
            <person name="Wahlestedt C."/>
            <person name="Mattick J.S."/>
            <person name="Hume D.A."/>
            <person name="Kai C."/>
            <person name="Sasaki D."/>
            <person name="Tomaru Y."/>
            <person name="Fukuda S."/>
            <person name="Kanamori-Katayama M."/>
            <person name="Suzuki M."/>
            <person name="Aoki J."/>
            <person name="Arakawa T."/>
            <person name="Iida J."/>
            <person name="Imamura K."/>
            <person name="Itoh M."/>
            <person name="Kato T."/>
            <person name="Kawaji H."/>
            <person name="Kawagashira N."/>
            <person name="Kawashima T."/>
            <person name="Kojima M."/>
            <person name="Kondo S."/>
            <person name="Konno H."/>
            <person name="Nakano K."/>
            <person name="Ninomiya N."/>
            <person name="Nishio T."/>
            <person name="Okada M."/>
            <person name="Plessy C."/>
            <person name="Shibata K."/>
            <person name="Shiraki T."/>
            <person name="Suzuki S."/>
            <person name="Tagami M."/>
            <person name="Waki K."/>
            <person name="Watahiki A."/>
            <person name="Okamura-Oho Y."/>
            <person name="Suzuki H."/>
            <person name="Kawai J."/>
            <person name="Hayashizaki Y."/>
        </authorList>
    </citation>
    <scope>NUCLEOTIDE SEQUENCE [LARGE SCALE MRNA] (ISOFORM 2)</scope>
    <source>
        <strain>C57BL/6J</strain>
        <tissue>Liver</tissue>
    </source>
</reference>
<reference key="2">
    <citation type="submission" date="2003-11" db="EMBL/GenBank/DDBJ databases">
        <title>Genomic sequence analysis in the mouse t-complex region.</title>
        <authorList>
            <person name="Brathwaite M."/>
            <person name="Waeltz P."/>
            <person name="Dudekula D."/>
            <person name="Nagaraja R."/>
        </authorList>
    </citation>
    <scope>NUCLEOTIDE SEQUENCE [GENOMIC DNA] (ISOFORM 3)</scope>
</reference>
<reference key="3">
    <citation type="journal article" date="2004" name="Genome Res.">
        <title>The status, quality, and expansion of the NIH full-length cDNA project: the Mammalian Gene Collection (MGC).</title>
        <authorList>
            <consortium name="The MGC Project Team"/>
        </authorList>
    </citation>
    <scope>NUCLEOTIDE SEQUENCE [LARGE SCALE MRNA] (ISOFORM 1)</scope>
    <scope>NUCLEOTIDE SEQUENCE [LARGE SCALE MRNA] OF 26-727 (ISOFORM 3)</scope>
    <source>
        <strain>C57BL/6J</strain>
        <tissue>Eye</tissue>
    </source>
</reference>
<reference key="4">
    <citation type="journal article" date="2010" name="FEBS J.">
        <title>The SWI/SNF protein BAF60b is ubiquitinated through a signalling process involving Rac GTPase and the RING finger protein Unkempt.</title>
        <authorList>
            <person name="Lores P."/>
            <person name="Visvikis O."/>
            <person name="Luna R."/>
            <person name="Lemichez E."/>
            <person name="Gacon G."/>
        </authorList>
    </citation>
    <scope>TISSUE SPECIFICITY (ISOFORM 3)</scope>
</reference>
<comment type="function">
    <text evidence="1">May participate in a protein complex showing an E3 ligase activity regulated by Rac1. Ubiquitination is directed towards itself and possibly other substrates, such as Baf60b/Smarcd2. Intrinsic E3 ligase activity has not been proven.</text>
</comment>
<comment type="pathway">
    <text>Protein modification; protein ubiquitination.</text>
</comment>
<comment type="subunit">
    <text evidence="1">Interacts with the GTP-bound form of Rac1. Interacts with Baf60b/Smarcd2 (By similarity).</text>
</comment>
<comment type="subcellular location">
    <subcellularLocation>
        <location evidence="1">Cytoplasm</location>
    </subcellularLocation>
    <subcellularLocation>
        <location evidence="1">Nucleus</location>
    </subcellularLocation>
    <text evidence="1">Primarily localized in the cytoplasm but has the ability to shuttle between the nucleus and the cytoplasm.</text>
</comment>
<comment type="alternative products">
    <event type="alternative splicing"/>
    <isoform>
        <id>Q5FWH2-3</id>
        <name>3</name>
        <sequence type="displayed"/>
    </isoform>
    <isoform>
        <id>Q5FWH2-1</id>
        <name>1</name>
        <sequence type="described" ref="VSP_039444"/>
    </isoform>
    <isoform>
        <id>Q5FWH2-2</id>
        <name>2</name>
        <sequence type="described" ref="VSP_039445 VSP_039446 VSP_039447"/>
    </isoform>
</comment>
<comment type="tissue specificity">
    <text>Ubiquitous.</text>
</comment>
<comment type="domain">
    <text evidence="1">Although this protein contains a RING domain, intrinsic E3 ligase activity has not been proven.</text>
</comment>
<comment type="PTM">
    <text evidence="1">Ubiquitination is enhanced by activated Rac1. The presence of the RING finger domain is not essential for ubiquitination to occur (By similarity).</text>
</comment>
<comment type="similarity">
    <text evidence="7">Belongs to the unkempt family.</text>
</comment>
<gene>
    <name type="primary">Unkl</name>
</gene>
<organism>
    <name type="scientific">Mus musculus</name>
    <name type="common">Mouse</name>
    <dbReference type="NCBI Taxonomy" id="10090"/>
    <lineage>
        <taxon>Eukaryota</taxon>
        <taxon>Metazoa</taxon>
        <taxon>Chordata</taxon>
        <taxon>Craniata</taxon>
        <taxon>Vertebrata</taxon>
        <taxon>Euteleostomi</taxon>
        <taxon>Mammalia</taxon>
        <taxon>Eutheria</taxon>
        <taxon>Euarchontoglires</taxon>
        <taxon>Glires</taxon>
        <taxon>Rodentia</taxon>
        <taxon>Myomorpha</taxon>
        <taxon>Muroidea</taxon>
        <taxon>Muridae</taxon>
        <taxon>Murinae</taxon>
        <taxon>Mus</taxon>
        <taxon>Mus</taxon>
    </lineage>
</organism>